<gene>
    <name evidence="1" type="primary">adk</name>
    <name type="ordered locus">gbs0079</name>
</gene>
<dbReference type="EC" id="2.7.4.3" evidence="1"/>
<dbReference type="EMBL" id="AL766843">
    <property type="protein sequence ID" value="CAD45724.1"/>
    <property type="molecule type" value="Genomic_DNA"/>
</dbReference>
<dbReference type="RefSeq" id="WP_001050420.1">
    <property type="nucleotide sequence ID" value="NC_004368.1"/>
</dbReference>
<dbReference type="SMR" id="P65203"/>
<dbReference type="KEGG" id="san:adk"/>
<dbReference type="eggNOG" id="COG0563">
    <property type="taxonomic scope" value="Bacteria"/>
</dbReference>
<dbReference type="HOGENOM" id="CLU_032354_1_2_9"/>
<dbReference type="UniPathway" id="UPA00588">
    <property type="reaction ID" value="UER00649"/>
</dbReference>
<dbReference type="Proteomes" id="UP000000823">
    <property type="component" value="Chromosome"/>
</dbReference>
<dbReference type="GO" id="GO:0005737">
    <property type="term" value="C:cytoplasm"/>
    <property type="evidence" value="ECO:0007669"/>
    <property type="project" value="UniProtKB-SubCell"/>
</dbReference>
<dbReference type="GO" id="GO:0004017">
    <property type="term" value="F:adenylate kinase activity"/>
    <property type="evidence" value="ECO:0007669"/>
    <property type="project" value="UniProtKB-UniRule"/>
</dbReference>
<dbReference type="GO" id="GO:0005524">
    <property type="term" value="F:ATP binding"/>
    <property type="evidence" value="ECO:0007669"/>
    <property type="project" value="UniProtKB-UniRule"/>
</dbReference>
<dbReference type="GO" id="GO:0044209">
    <property type="term" value="P:AMP salvage"/>
    <property type="evidence" value="ECO:0007669"/>
    <property type="project" value="UniProtKB-UniRule"/>
</dbReference>
<dbReference type="CDD" id="cd01428">
    <property type="entry name" value="ADK"/>
    <property type="match status" value="1"/>
</dbReference>
<dbReference type="FunFam" id="3.40.50.300:FF:000106">
    <property type="entry name" value="Adenylate kinase mitochondrial"/>
    <property type="match status" value="1"/>
</dbReference>
<dbReference type="Gene3D" id="3.40.50.300">
    <property type="entry name" value="P-loop containing nucleotide triphosphate hydrolases"/>
    <property type="match status" value="1"/>
</dbReference>
<dbReference type="HAMAP" id="MF_00235">
    <property type="entry name" value="Adenylate_kinase_Adk"/>
    <property type="match status" value="1"/>
</dbReference>
<dbReference type="InterPro" id="IPR006259">
    <property type="entry name" value="Adenyl_kin_sub"/>
</dbReference>
<dbReference type="InterPro" id="IPR000850">
    <property type="entry name" value="Adenylat/UMP-CMP_kin"/>
</dbReference>
<dbReference type="InterPro" id="IPR033690">
    <property type="entry name" value="Adenylat_kinase_CS"/>
</dbReference>
<dbReference type="InterPro" id="IPR027417">
    <property type="entry name" value="P-loop_NTPase"/>
</dbReference>
<dbReference type="NCBIfam" id="TIGR01351">
    <property type="entry name" value="adk"/>
    <property type="match status" value="1"/>
</dbReference>
<dbReference type="NCBIfam" id="NF001380">
    <property type="entry name" value="PRK00279.1-2"/>
    <property type="match status" value="1"/>
</dbReference>
<dbReference type="NCBIfam" id="NF001381">
    <property type="entry name" value="PRK00279.1-3"/>
    <property type="match status" value="1"/>
</dbReference>
<dbReference type="NCBIfam" id="NF001382">
    <property type="entry name" value="PRK00279.1-4"/>
    <property type="match status" value="1"/>
</dbReference>
<dbReference type="NCBIfam" id="NF011100">
    <property type="entry name" value="PRK14527.1"/>
    <property type="match status" value="1"/>
</dbReference>
<dbReference type="PANTHER" id="PTHR23359">
    <property type="entry name" value="NUCLEOTIDE KINASE"/>
    <property type="match status" value="1"/>
</dbReference>
<dbReference type="Pfam" id="PF00406">
    <property type="entry name" value="ADK"/>
    <property type="match status" value="1"/>
</dbReference>
<dbReference type="PRINTS" id="PR00094">
    <property type="entry name" value="ADENYLTKNASE"/>
</dbReference>
<dbReference type="SUPFAM" id="SSF52540">
    <property type="entry name" value="P-loop containing nucleoside triphosphate hydrolases"/>
    <property type="match status" value="1"/>
</dbReference>
<dbReference type="PROSITE" id="PS00113">
    <property type="entry name" value="ADENYLATE_KINASE"/>
    <property type="match status" value="1"/>
</dbReference>
<protein>
    <recommendedName>
        <fullName evidence="1">Adenylate kinase</fullName>
        <shortName evidence="1">AK</shortName>
        <ecNumber evidence="1">2.7.4.3</ecNumber>
    </recommendedName>
    <alternativeName>
        <fullName evidence="1">ATP-AMP transphosphorylase</fullName>
    </alternativeName>
    <alternativeName>
        <fullName evidence="1">ATP:AMP phosphotransferase</fullName>
    </alternativeName>
    <alternativeName>
        <fullName evidence="1">Adenylate monophosphate kinase</fullName>
    </alternativeName>
</protein>
<name>KAD_STRA3</name>
<evidence type="ECO:0000255" key="1">
    <source>
        <dbReference type="HAMAP-Rule" id="MF_00235"/>
    </source>
</evidence>
<keyword id="KW-0067">ATP-binding</keyword>
<keyword id="KW-0963">Cytoplasm</keyword>
<keyword id="KW-0418">Kinase</keyword>
<keyword id="KW-0545">Nucleotide biosynthesis</keyword>
<keyword id="KW-0547">Nucleotide-binding</keyword>
<keyword id="KW-0808">Transferase</keyword>
<proteinExistence type="inferred from homology"/>
<sequence length="212" mass="23696">MNLLIMGLPGAGKGTQAAKIVEEFGVAHISTGDMFRAAMANQTEMGRLAKSYIDKGELVPDEVTNGIVKERLAEDDIAEKGFLLDGYPRTIEQAHALDATLEELGLRLDGVINIKVDPSCLIERLSGRIINRKTGETFHKVFNPPVDYKEEDYYQREDDKPETVKRRLDVNIAQGEPILEHYRKLGLVTDIEGNQEITEVFADVEKALLELK</sequence>
<organism>
    <name type="scientific">Streptococcus agalactiae serotype III (strain NEM316)</name>
    <dbReference type="NCBI Taxonomy" id="211110"/>
    <lineage>
        <taxon>Bacteria</taxon>
        <taxon>Bacillati</taxon>
        <taxon>Bacillota</taxon>
        <taxon>Bacilli</taxon>
        <taxon>Lactobacillales</taxon>
        <taxon>Streptococcaceae</taxon>
        <taxon>Streptococcus</taxon>
    </lineage>
</organism>
<reference key="1">
    <citation type="journal article" date="2002" name="Mol. Microbiol.">
        <title>Genome sequence of Streptococcus agalactiae, a pathogen causing invasive neonatal disease.</title>
        <authorList>
            <person name="Glaser P."/>
            <person name="Rusniok C."/>
            <person name="Buchrieser C."/>
            <person name="Chevalier F."/>
            <person name="Frangeul L."/>
            <person name="Msadek T."/>
            <person name="Zouine M."/>
            <person name="Couve E."/>
            <person name="Lalioui L."/>
            <person name="Poyart C."/>
            <person name="Trieu-Cuot P."/>
            <person name="Kunst F."/>
        </authorList>
    </citation>
    <scope>NUCLEOTIDE SEQUENCE [LARGE SCALE GENOMIC DNA]</scope>
    <source>
        <strain>NEM316</strain>
    </source>
</reference>
<comment type="function">
    <text evidence="1">Catalyzes the reversible transfer of the terminal phosphate group between ATP and AMP. Plays an important role in cellular energy homeostasis and in adenine nucleotide metabolism.</text>
</comment>
<comment type="catalytic activity">
    <reaction evidence="1">
        <text>AMP + ATP = 2 ADP</text>
        <dbReference type="Rhea" id="RHEA:12973"/>
        <dbReference type="ChEBI" id="CHEBI:30616"/>
        <dbReference type="ChEBI" id="CHEBI:456215"/>
        <dbReference type="ChEBI" id="CHEBI:456216"/>
        <dbReference type="EC" id="2.7.4.3"/>
    </reaction>
</comment>
<comment type="pathway">
    <text evidence="1">Purine metabolism; AMP biosynthesis via salvage pathway; AMP from ADP: step 1/1.</text>
</comment>
<comment type="subunit">
    <text evidence="1">Monomer.</text>
</comment>
<comment type="subcellular location">
    <subcellularLocation>
        <location evidence="1">Cytoplasm</location>
    </subcellularLocation>
</comment>
<comment type="domain">
    <text evidence="1">Consists of three domains, a large central CORE domain and two small peripheral domains, NMPbind and LID, which undergo movements during catalysis. The LID domain closes over the site of phosphoryl transfer upon ATP binding. Assembling and dissambling the active center during each catalytic cycle provides an effective means to prevent ATP hydrolysis.</text>
</comment>
<comment type="similarity">
    <text evidence="1">Belongs to the adenylate kinase family.</text>
</comment>
<feature type="chain" id="PRO_0000158853" description="Adenylate kinase">
    <location>
        <begin position="1"/>
        <end position="212"/>
    </location>
</feature>
<feature type="region of interest" description="NMP" evidence="1">
    <location>
        <begin position="30"/>
        <end position="59"/>
    </location>
</feature>
<feature type="region of interest" description="LID" evidence="1">
    <location>
        <begin position="127"/>
        <end position="159"/>
    </location>
</feature>
<feature type="binding site" evidence="1">
    <location>
        <begin position="10"/>
        <end position="15"/>
    </location>
    <ligand>
        <name>ATP</name>
        <dbReference type="ChEBI" id="CHEBI:30616"/>
    </ligand>
</feature>
<feature type="binding site" evidence="1">
    <location>
        <position position="31"/>
    </location>
    <ligand>
        <name>AMP</name>
        <dbReference type="ChEBI" id="CHEBI:456215"/>
    </ligand>
</feature>
<feature type="binding site" evidence="1">
    <location>
        <position position="36"/>
    </location>
    <ligand>
        <name>AMP</name>
        <dbReference type="ChEBI" id="CHEBI:456215"/>
    </ligand>
</feature>
<feature type="binding site" evidence="1">
    <location>
        <begin position="57"/>
        <end position="59"/>
    </location>
    <ligand>
        <name>AMP</name>
        <dbReference type="ChEBI" id="CHEBI:456215"/>
    </ligand>
</feature>
<feature type="binding site" evidence="1">
    <location>
        <begin position="86"/>
        <end position="89"/>
    </location>
    <ligand>
        <name>AMP</name>
        <dbReference type="ChEBI" id="CHEBI:456215"/>
    </ligand>
</feature>
<feature type="binding site" evidence="1">
    <location>
        <position position="93"/>
    </location>
    <ligand>
        <name>AMP</name>
        <dbReference type="ChEBI" id="CHEBI:456215"/>
    </ligand>
</feature>
<feature type="binding site" evidence="1">
    <location>
        <position position="128"/>
    </location>
    <ligand>
        <name>ATP</name>
        <dbReference type="ChEBI" id="CHEBI:30616"/>
    </ligand>
</feature>
<feature type="binding site" evidence="1">
    <location>
        <begin position="137"/>
        <end position="138"/>
    </location>
    <ligand>
        <name>ATP</name>
        <dbReference type="ChEBI" id="CHEBI:30616"/>
    </ligand>
</feature>
<feature type="binding site" evidence="1">
    <location>
        <position position="156"/>
    </location>
    <ligand>
        <name>AMP</name>
        <dbReference type="ChEBI" id="CHEBI:456215"/>
    </ligand>
</feature>
<feature type="binding site" evidence="1">
    <location>
        <position position="167"/>
    </location>
    <ligand>
        <name>AMP</name>
        <dbReference type="ChEBI" id="CHEBI:456215"/>
    </ligand>
</feature>
<feature type="binding site" evidence="1">
    <location>
        <position position="195"/>
    </location>
    <ligand>
        <name>ATP</name>
        <dbReference type="ChEBI" id="CHEBI:30616"/>
    </ligand>
</feature>
<accession>P65203</accession>
<accession>Q8E2B3</accession>
<accession>Q8E7S0</accession>